<sequence length="258" mass="26987">MMNPLVIKLGGVLLDSEEALERLFTALVTYREKHERPLVIMHGGGCLVDELMKRLALPVVKKNGLRVTPADQIDIITGALAGTANKTLLAWAVKHQINAVGLCLADGNTVTVTLLDAELGHVGKAQPGSAALVQTLLAAGYMPIISSIGITVEGQLMNVNADQAATALAATLGADLILLSDVSGILDGKGQRIAEMTAQKAEQLIAQGIITDGMVVKVNAALDAARSLGRPVDIASWRHSEQLPALFNGVPIGTRISV</sequence>
<organism>
    <name type="scientific">Yersinia pestis bv. Antiqua (strain Angola)</name>
    <dbReference type="NCBI Taxonomy" id="349746"/>
    <lineage>
        <taxon>Bacteria</taxon>
        <taxon>Pseudomonadati</taxon>
        <taxon>Pseudomonadota</taxon>
        <taxon>Gammaproteobacteria</taxon>
        <taxon>Enterobacterales</taxon>
        <taxon>Yersiniaceae</taxon>
        <taxon>Yersinia</taxon>
    </lineage>
</organism>
<comment type="function">
    <text evidence="1">Catalyzes the ATP-dependent phosphorylation of N-acetyl-L-glutamate.</text>
</comment>
<comment type="catalytic activity">
    <reaction evidence="1">
        <text>N-acetyl-L-glutamate + ATP = N-acetyl-L-glutamyl 5-phosphate + ADP</text>
        <dbReference type="Rhea" id="RHEA:14629"/>
        <dbReference type="ChEBI" id="CHEBI:30616"/>
        <dbReference type="ChEBI" id="CHEBI:44337"/>
        <dbReference type="ChEBI" id="CHEBI:57936"/>
        <dbReference type="ChEBI" id="CHEBI:456216"/>
        <dbReference type="EC" id="2.7.2.8"/>
    </reaction>
</comment>
<comment type="pathway">
    <text evidence="1">Amino-acid biosynthesis; L-arginine biosynthesis; N(2)-acetyl-L-ornithine from L-glutamate: step 2/4.</text>
</comment>
<comment type="subunit">
    <text evidence="1">Homodimer.</text>
</comment>
<comment type="subcellular location">
    <subcellularLocation>
        <location evidence="1">Cytoplasm</location>
    </subcellularLocation>
</comment>
<comment type="similarity">
    <text evidence="1">Belongs to the acetylglutamate kinase family. ArgB subfamily.</text>
</comment>
<proteinExistence type="inferred from homology"/>
<reference key="1">
    <citation type="journal article" date="2010" name="J. Bacteriol.">
        <title>Genome sequence of the deep-rooted Yersinia pestis strain Angola reveals new insights into the evolution and pangenome of the plague bacterium.</title>
        <authorList>
            <person name="Eppinger M."/>
            <person name="Worsham P.L."/>
            <person name="Nikolich M.P."/>
            <person name="Riley D.R."/>
            <person name="Sebastian Y."/>
            <person name="Mou S."/>
            <person name="Achtman M."/>
            <person name="Lindler L.E."/>
            <person name="Ravel J."/>
        </authorList>
    </citation>
    <scope>NUCLEOTIDE SEQUENCE [LARGE SCALE GENOMIC DNA]</scope>
    <source>
        <strain>Angola</strain>
    </source>
</reference>
<dbReference type="EC" id="2.7.2.8" evidence="1"/>
<dbReference type="EMBL" id="CP000901">
    <property type="protein sequence ID" value="ABX87922.1"/>
    <property type="molecule type" value="Genomic_DNA"/>
</dbReference>
<dbReference type="SMR" id="A9R515"/>
<dbReference type="KEGG" id="ypg:YpAngola_A3897"/>
<dbReference type="UniPathway" id="UPA00068">
    <property type="reaction ID" value="UER00107"/>
</dbReference>
<dbReference type="GO" id="GO:0005737">
    <property type="term" value="C:cytoplasm"/>
    <property type="evidence" value="ECO:0007669"/>
    <property type="project" value="UniProtKB-SubCell"/>
</dbReference>
<dbReference type="GO" id="GO:0003991">
    <property type="term" value="F:acetylglutamate kinase activity"/>
    <property type="evidence" value="ECO:0007669"/>
    <property type="project" value="UniProtKB-UniRule"/>
</dbReference>
<dbReference type="GO" id="GO:0005524">
    <property type="term" value="F:ATP binding"/>
    <property type="evidence" value="ECO:0007669"/>
    <property type="project" value="UniProtKB-UniRule"/>
</dbReference>
<dbReference type="GO" id="GO:0042450">
    <property type="term" value="P:arginine biosynthetic process via ornithine"/>
    <property type="evidence" value="ECO:0007669"/>
    <property type="project" value="UniProtKB-UniRule"/>
</dbReference>
<dbReference type="GO" id="GO:0006526">
    <property type="term" value="P:L-arginine biosynthetic process"/>
    <property type="evidence" value="ECO:0007669"/>
    <property type="project" value="UniProtKB-UniPathway"/>
</dbReference>
<dbReference type="CDD" id="cd04249">
    <property type="entry name" value="AAK_NAGK-NC"/>
    <property type="match status" value="1"/>
</dbReference>
<dbReference type="FunFam" id="3.40.1160.10:FF:000008">
    <property type="entry name" value="Acetylglutamate kinase"/>
    <property type="match status" value="1"/>
</dbReference>
<dbReference type="Gene3D" id="3.40.1160.10">
    <property type="entry name" value="Acetylglutamate kinase-like"/>
    <property type="match status" value="1"/>
</dbReference>
<dbReference type="HAMAP" id="MF_00082">
    <property type="entry name" value="ArgB"/>
    <property type="match status" value="1"/>
</dbReference>
<dbReference type="InterPro" id="IPR036393">
    <property type="entry name" value="AceGlu_kinase-like_sf"/>
</dbReference>
<dbReference type="InterPro" id="IPR004662">
    <property type="entry name" value="AcgluKinase_fam"/>
</dbReference>
<dbReference type="InterPro" id="IPR037528">
    <property type="entry name" value="ArgB"/>
</dbReference>
<dbReference type="InterPro" id="IPR001048">
    <property type="entry name" value="Asp/Glu/Uridylate_kinase"/>
</dbReference>
<dbReference type="InterPro" id="IPR041731">
    <property type="entry name" value="NAGK-NC"/>
</dbReference>
<dbReference type="NCBIfam" id="TIGR00761">
    <property type="entry name" value="argB"/>
    <property type="match status" value="1"/>
</dbReference>
<dbReference type="PANTHER" id="PTHR23342">
    <property type="entry name" value="N-ACETYLGLUTAMATE SYNTHASE"/>
    <property type="match status" value="1"/>
</dbReference>
<dbReference type="PANTHER" id="PTHR23342:SF0">
    <property type="entry name" value="N-ACETYLGLUTAMATE SYNTHASE, MITOCHONDRIAL"/>
    <property type="match status" value="1"/>
</dbReference>
<dbReference type="Pfam" id="PF00696">
    <property type="entry name" value="AA_kinase"/>
    <property type="match status" value="1"/>
</dbReference>
<dbReference type="PIRSF" id="PIRSF000728">
    <property type="entry name" value="NAGK"/>
    <property type="match status" value="1"/>
</dbReference>
<dbReference type="SUPFAM" id="SSF53633">
    <property type="entry name" value="Carbamate kinase-like"/>
    <property type="match status" value="1"/>
</dbReference>
<evidence type="ECO:0000255" key="1">
    <source>
        <dbReference type="HAMAP-Rule" id="MF_00082"/>
    </source>
</evidence>
<keyword id="KW-0028">Amino-acid biosynthesis</keyword>
<keyword id="KW-0055">Arginine biosynthesis</keyword>
<keyword id="KW-0067">ATP-binding</keyword>
<keyword id="KW-0963">Cytoplasm</keyword>
<keyword id="KW-0418">Kinase</keyword>
<keyword id="KW-0547">Nucleotide-binding</keyword>
<keyword id="KW-0808">Transferase</keyword>
<accession>A9R515</accession>
<protein>
    <recommendedName>
        <fullName evidence="1">Acetylglutamate kinase</fullName>
        <ecNumber evidence="1">2.7.2.8</ecNumber>
    </recommendedName>
    <alternativeName>
        <fullName evidence="1">N-acetyl-L-glutamate 5-phosphotransferase</fullName>
    </alternativeName>
    <alternativeName>
        <fullName evidence="1">NAG kinase</fullName>
        <shortName evidence="1">NAGK</shortName>
    </alternativeName>
</protein>
<gene>
    <name evidence="1" type="primary">argB</name>
    <name type="ordered locus">YpAngola_A3897</name>
</gene>
<feature type="chain" id="PRO_1000092895" description="Acetylglutamate kinase">
    <location>
        <begin position="1"/>
        <end position="258"/>
    </location>
</feature>
<feature type="binding site" evidence="1">
    <location>
        <begin position="44"/>
        <end position="45"/>
    </location>
    <ligand>
        <name>substrate</name>
    </ligand>
</feature>
<feature type="binding site" evidence="1">
    <location>
        <position position="66"/>
    </location>
    <ligand>
        <name>substrate</name>
    </ligand>
</feature>
<feature type="binding site" evidence="1">
    <location>
        <position position="158"/>
    </location>
    <ligand>
        <name>substrate</name>
    </ligand>
</feature>
<feature type="binding site" evidence="1">
    <location>
        <begin position="181"/>
        <end position="186"/>
    </location>
    <ligand>
        <name>ATP</name>
        <dbReference type="ChEBI" id="CHEBI:30616"/>
    </ligand>
</feature>
<feature type="binding site" evidence="1">
    <location>
        <begin position="209"/>
        <end position="211"/>
    </location>
    <ligand>
        <name>ATP</name>
        <dbReference type="ChEBI" id="CHEBI:30616"/>
    </ligand>
</feature>
<feature type="site" description="Transition state stabilizer" evidence="1">
    <location>
        <position position="8"/>
    </location>
</feature>
<feature type="site" description="Transition state stabilizer" evidence="1">
    <location>
        <position position="217"/>
    </location>
</feature>
<name>ARGB_YERPG</name>